<feature type="chain" id="PRO_0000161304" description="Fumarate hydratase class II">
    <location>
        <begin position="1"/>
        <end position="465"/>
    </location>
</feature>
<feature type="active site" description="Proton donor/acceptor" evidence="1">
    <location>
        <position position="190"/>
    </location>
</feature>
<feature type="active site" evidence="1">
    <location>
        <position position="320"/>
    </location>
</feature>
<feature type="binding site" evidence="1">
    <location>
        <begin position="100"/>
        <end position="102"/>
    </location>
    <ligand>
        <name>substrate</name>
    </ligand>
</feature>
<feature type="binding site" description="in site B" evidence="1">
    <location>
        <begin position="131"/>
        <end position="134"/>
    </location>
    <ligand>
        <name>substrate</name>
    </ligand>
</feature>
<feature type="binding site" evidence="1">
    <location>
        <begin position="141"/>
        <end position="143"/>
    </location>
    <ligand>
        <name>substrate</name>
    </ligand>
</feature>
<feature type="binding site" evidence="1">
    <location>
        <position position="189"/>
    </location>
    <ligand>
        <name>substrate</name>
    </ligand>
</feature>
<feature type="binding site" evidence="1">
    <location>
        <position position="321"/>
    </location>
    <ligand>
        <name>substrate</name>
    </ligand>
</feature>
<feature type="binding site" evidence="1">
    <location>
        <begin position="326"/>
        <end position="328"/>
    </location>
    <ligand>
        <name>substrate</name>
    </ligand>
</feature>
<feature type="site" description="Important for catalytic activity" evidence="1">
    <location>
        <position position="333"/>
    </location>
</feature>
<organism>
    <name type="scientific">Mesorhizobium japonicum (strain LMG 29417 / CECT 9101 / MAFF 303099)</name>
    <name type="common">Mesorhizobium loti (strain MAFF 303099)</name>
    <dbReference type="NCBI Taxonomy" id="266835"/>
    <lineage>
        <taxon>Bacteria</taxon>
        <taxon>Pseudomonadati</taxon>
        <taxon>Pseudomonadota</taxon>
        <taxon>Alphaproteobacteria</taxon>
        <taxon>Hyphomicrobiales</taxon>
        <taxon>Phyllobacteriaceae</taxon>
        <taxon>Mesorhizobium</taxon>
    </lineage>
</organism>
<proteinExistence type="inferred from homology"/>
<name>FUMC_RHILO</name>
<protein>
    <recommendedName>
        <fullName evidence="1">Fumarate hydratase class II</fullName>
        <shortName evidence="1">Fumarase C</shortName>
        <ecNumber evidence="1">4.2.1.2</ecNumber>
    </recommendedName>
    <alternativeName>
        <fullName evidence="1">Aerobic fumarase</fullName>
    </alternativeName>
    <alternativeName>
        <fullName evidence="1">Iron-independent fumarase</fullName>
    </alternativeName>
</protein>
<comment type="function">
    <text evidence="1">Involved in the TCA cycle. Catalyzes the stereospecific interconversion of fumarate to L-malate.</text>
</comment>
<comment type="catalytic activity">
    <reaction evidence="1">
        <text>(S)-malate = fumarate + H2O</text>
        <dbReference type="Rhea" id="RHEA:12460"/>
        <dbReference type="ChEBI" id="CHEBI:15377"/>
        <dbReference type="ChEBI" id="CHEBI:15589"/>
        <dbReference type="ChEBI" id="CHEBI:29806"/>
        <dbReference type="EC" id="4.2.1.2"/>
    </reaction>
</comment>
<comment type="pathway">
    <text evidence="1">Carbohydrate metabolism; tricarboxylic acid cycle; (S)-malate from fumarate: step 1/1.</text>
</comment>
<comment type="subunit">
    <text evidence="1">Homotetramer.</text>
</comment>
<comment type="subcellular location">
    <subcellularLocation>
        <location evidence="1">Cytoplasm</location>
    </subcellularLocation>
</comment>
<comment type="miscellaneous">
    <text evidence="1">There are 2 substrate-binding sites: the catalytic A site, and the non-catalytic B site that may play a role in the transfer of substrate or product between the active site and the solvent. Alternatively, the B site may bind allosteric effectors.</text>
</comment>
<comment type="similarity">
    <text evidence="1">Belongs to the class-II fumarase/aspartase family. Fumarase subfamily.</text>
</comment>
<evidence type="ECO:0000255" key="1">
    <source>
        <dbReference type="HAMAP-Rule" id="MF_00743"/>
    </source>
</evidence>
<dbReference type="EC" id="4.2.1.2" evidence="1"/>
<dbReference type="EMBL" id="BA000012">
    <property type="protein sequence ID" value="BAB53785.1"/>
    <property type="molecule type" value="Genomic_DNA"/>
</dbReference>
<dbReference type="RefSeq" id="WP_010915411.1">
    <property type="nucleotide sequence ID" value="NC_002678.2"/>
</dbReference>
<dbReference type="SMR" id="Q983U5"/>
<dbReference type="KEGG" id="mlo:mll8172"/>
<dbReference type="PATRIC" id="fig|266835.9.peg.6528"/>
<dbReference type="eggNOG" id="COG0114">
    <property type="taxonomic scope" value="Bacteria"/>
</dbReference>
<dbReference type="HOGENOM" id="CLU_021594_4_1_5"/>
<dbReference type="UniPathway" id="UPA00223">
    <property type="reaction ID" value="UER01007"/>
</dbReference>
<dbReference type="Proteomes" id="UP000000552">
    <property type="component" value="Chromosome"/>
</dbReference>
<dbReference type="GO" id="GO:0005737">
    <property type="term" value="C:cytoplasm"/>
    <property type="evidence" value="ECO:0007669"/>
    <property type="project" value="UniProtKB-SubCell"/>
</dbReference>
<dbReference type="GO" id="GO:0004333">
    <property type="term" value="F:fumarate hydratase activity"/>
    <property type="evidence" value="ECO:0007669"/>
    <property type="project" value="UniProtKB-UniRule"/>
</dbReference>
<dbReference type="GO" id="GO:0006106">
    <property type="term" value="P:fumarate metabolic process"/>
    <property type="evidence" value="ECO:0007669"/>
    <property type="project" value="InterPro"/>
</dbReference>
<dbReference type="GO" id="GO:0006108">
    <property type="term" value="P:malate metabolic process"/>
    <property type="evidence" value="ECO:0007669"/>
    <property type="project" value="TreeGrafter"/>
</dbReference>
<dbReference type="GO" id="GO:0006099">
    <property type="term" value="P:tricarboxylic acid cycle"/>
    <property type="evidence" value="ECO:0007669"/>
    <property type="project" value="UniProtKB-UniRule"/>
</dbReference>
<dbReference type="CDD" id="cd01362">
    <property type="entry name" value="Fumarase_classII"/>
    <property type="match status" value="1"/>
</dbReference>
<dbReference type="FunFam" id="1.10.40.30:FF:000002">
    <property type="entry name" value="Fumarate hydratase class II"/>
    <property type="match status" value="1"/>
</dbReference>
<dbReference type="FunFam" id="1.10.275.10:FF:000001">
    <property type="entry name" value="Fumarate hydratase, mitochondrial"/>
    <property type="match status" value="1"/>
</dbReference>
<dbReference type="FunFam" id="1.20.200.10:FF:000001">
    <property type="entry name" value="Fumarate hydratase, mitochondrial"/>
    <property type="match status" value="1"/>
</dbReference>
<dbReference type="Gene3D" id="1.10.40.30">
    <property type="entry name" value="Fumarase/aspartase (C-terminal domain)"/>
    <property type="match status" value="1"/>
</dbReference>
<dbReference type="Gene3D" id="1.20.200.10">
    <property type="entry name" value="Fumarase/aspartase (Central domain)"/>
    <property type="match status" value="1"/>
</dbReference>
<dbReference type="Gene3D" id="1.10.275.10">
    <property type="entry name" value="Fumarase/aspartase (N-terminal domain)"/>
    <property type="match status" value="1"/>
</dbReference>
<dbReference type="HAMAP" id="MF_00743">
    <property type="entry name" value="FumaraseC"/>
    <property type="match status" value="1"/>
</dbReference>
<dbReference type="InterPro" id="IPR005677">
    <property type="entry name" value="Fum_hydII"/>
</dbReference>
<dbReference type="InterPro" id="IPR024083">
    <property type="entry name" value="Fumarase/histidase_N"/>
</dbReference>
<dbReference type="InterPro" id="IPR018951">
    <property type="entry name" value="Fumarase_C_C"/>
</dbReference>
<dbReference type="InterPro" id="IPR020557">
    <property type="entry name" value="Fumarate_lyase_CS"/>
</dbReference>
<dbReference type="InterPro" id="IPR000362">
    <property type="entry name" value="Fumarate_lyase_fam"/>
</dbReference>
<dbReference type="InterPro" id="IPR022761">
    <property type="entry name" value="Fumarate_lyase_N"/>
</dbReference>
<dbReference type="InterPro" id="IPR008948">
    <property type="entry name" value="L-Aspartase-like"/>
</dbReference>
<dbReference type="NCBIfam" id="TIGR00979">
    <property type="entry name" value="fumC_II"/>
    <property type="match status" value="1"/>
</dbReference>
<dbReference type="NCBIfam" id="NF008909">
    <property type="entry name" value="PRK12273.1"/>
    <property type="match status" value="1"/>
</dbReference>
<dbReference type="PANTHER" id="PTHR11444">
    <property type="entry name" value="ASPARTATEAMMONIA/ARGININOSUCCINATE/ADENYLOSUCCINATE LYASE"/>
    <property type="match status" value="1"/>
</dbReference>
<dbReference type="PANTHER" id="PTHR11444:SF1">
    <property type="entry name" value="FUMARATE HYDRATASE, MITOCHONDRIAL"/>
    <property type="match status" value="1"/>
</dbReference>
<dbReference type="Pfam" id="PF10415">
    <property type="entry name" value="FumaraseC_C"/>
    <property type="match status" value="1"/>
</dbReference>
<dbReference type="Pfam" id="PF00206">
    <property type="entry name" value="Lyase_1"/>
    <property type="match status" value="1"/>
</dbReference>
<dbReference type="PRINTS" id="PR00145">
    <property type="entry name" value="ARGSUCLYASE"/>
</dbReference>
<dbReference type="PRINTS" id="PR00149">
    <property type="entry name" value="FUMRATELYASE"/>
</dbReference>
<dbReference type="SUPFAM" id="SSF48557">
    <property type="entry name" value="L-aspartase-like"/>
    <property type="match status" value="1"/>
</dbReference>
<dbReference type="PROSITE" id="PS00163">
    <property type="entry name" value="FUMARATE_LYASES"/>
    <property type="match status" value="1"/>
</dbReference>
<gene>
    <name evidence="1" type="primary">fumC</name>
    <name type="ordered locus">mll8172</name>
</gene>
<sequence>MTVAKTRTETDTFGPIEVAADRYWGAQAQRSLGNFKIGWEKQPASIVRALGVVKRAAAEVNMEMKRLDPVVGKAIVDAAQEVIDGKLNDHFPLVVWQTGSGTQSNMNANEVISNRAIEMLGGVMGSKKPVHPNDHVNMSQSSNDTYPTAMHIACAEQVVHHLIPALHHLHKALDAKARAFNHIIKIGRTHTQDATPLTLGQEFSGYAAQVASSIKRIEMTLPGLQELAQGGTAVGTGLNAPVGFAEKVADRIAAITGIAFVTAPNKFEALAAHDSMVFSHGAINAAAAALFKIANDIRFLGSGPRSGLGELSLPENEPGSSIMPGKVNPTQCEAMTQVCVQVFGNNAALTFAGSQGHFELNVYNPLMAYNFLQSVQLLSDASVSFTDNCVVGIEAREDNIKAALDRSLMLVTALAPTIGYDNAAKIAKTAHKNGTTLREEALATGLVSEVDYDRLVRPEDMTHPG</sequence>
<keyword id="KW-0963">Cytoplasm</keyword>
<keyword id="KW-0456">Lyase</keyword>
<keyword id="KW-0816">Tricarboxylic acid cycle</keyword>
<reference key="1">
    <citation type="journal article" date="2000" name="DNA Res.">
        <title>Complete genome structure of the nitrogen-fixing symbiotic bacterium Mesorhizobium loti.</title>
        <authorList>
            <person name="Kaneko T."/>
            <person name="Nakamura Y."/>
            <person name="Sato S."/>
            <person name="Asamizu E."/>
            <person name="Kato T."/>
            <person name="Sasamoto S."/>
            <person name="Watanabe A."/>
            <person name="Idesawa K."/>
            <person name="Ishikawa A."/>
            <person name="Kawashima K."/>
            <person name="Kimura T."/>
            <person name="Kishida Y."/>
            <person name="Kiyokawa C."/>
            <person name="Kohara M."/>
            <person name="Matsumoto M."/>
            <person name="Matsuno A."/>
            <person name="Mochizuki Y."/>
            <person name="Nakayama S."/>
            <person name="Nakazaki N."/>
            <person name="Shimpo S."/>
            <person name="Sugimoto M."/>
            <person name="Takeuchi C."/>
            <person name="Yamada M."/>
            <person name="Tabata S."/>
        </authorList>
    </citation>
    <scope>NUCLEOTIDE SEQUENCE [LARGE SCALE GENOMIC DNA]</scope>
    <source>
        <strain>LMG 29417 / CECT 9101 / MAFF 303099</strain>
    </source>
</reference>
<accession>Q983U5</accession>